<evidence type="ECO:0000250" key="1">
    <source>
        <dbReference type="UniProtKB" id="P50446"/>
    </source>
</evidence>
<evidence type="ECO:0000255" key="2">
    <source>
        <dbReference type="PROSITE-ProRule" id="PRU01188"/>
    </source>
</evidence>
<evidence type="ECO:0000256" key="3">
    <source>
        <dbReference type="SAM" id="MobiDB-lite"/>
    </source>
</evidence>
<evidence type="ECO:0000269" key="4">
    <source>
    </source>
</evidence>
<evidence type="ECO:0000269" key="5">
    <source>
    </source>
</evidence>
<evidence type="ECO:0000269" key="6">
    <source>
    </source>
</evidence>
<evidence type="ECO:0000269" key="7">
    <source>
    </source>
</evidence>
<evidence type="ECO:0000269" key="8">
    <source>
    </source>
</evidence>
<evidence type="ECO:0000269" key="9">
    <source>
    </source>
</evidence>
<evidence type="ECO:0000269" key="10">
    <source>
    </source>
</evidence>
<evidence type="ECO:0000269" key="11">
    <source>
    </source>
</evidence>
<evidence type="ECO:0000269" key="12">
    <source>
    </source>
</evidence>
<evidence type="ECO:0000269" key="13">
    <source>
    </source>
</evidence>
<evidence type="ECO:0000269" key="14">
    <source>
    </source>
</evidence>
<evidence type="ECO:0000269" key="15">
    <source>
    </source>
</evidence>
<evidence type="ECO:0000269" key="16">
    <source>
    </source>
</evidence>
<evidence type="ECO:0000269" key="17">
    <source>
    </source>
</evidence>
<evidence type="ECO:0000269" key="18">
    <source>
    </source>
</evidence>
<evidence type="ECO:0000269" key="19">
    <source ref="4"/>
</evidence>
<evidence type="ECO:0000305" key="20"/>
<evidence type="ECO:0007829" key="21">
    <source>
        <dbReference type="PDB" id="5KI0"/>
    </source>
</evidence>
<protein>
    <recommendedName>
        <fullName>Keratin, type II cytoskeletal 6A</fullName>
    </recommendedName>
    <alternativeName>
        <fullName>Cytokeratin-6A</fullName>
        <shortName>CK-6A</shortName>
    </alternativeName>
    <alternativeName>
        <fullName>Cytokeratin-6D</fullName>
        <shortName>CK-6D</shortName>
    </alternativeName>
    <alternativeName>
        <fullName>Keratin-6A</fullName>
        <shortName>K6A</shortName>
    </alternativeName>
    <alternativeName>
        <fullName>Type-II keratin Kb6</fullName>
    </alternativeName>
    <allergenName>Hom s 5</allergenName>
</protein>
<name>K2C6A_HUMAN</name>
<feature type="initiator methionine" description="Removed" evidence="19">
    <location>
        <position position="1"/>
    </location>
</feature>
<feature type="chain" id="PRO_0000063731" description="Keratin, type II cytoskeletal 6A">
    <location>
        <begin position="2"/>
        <end position="564"/>
    </location>
</feature>
<feature type="domain" description="IF rod" evidence="2">
    <location>
        <begin position="163"/>
        <end position="476"/>
    </location>
</feature>
<feature type="region of interest" description="Disordered" evidence="3">
    <location>
        <begin position="1"/>
        <end position="23"/>
    </location>
</feature>
<feature type="region of interest" description="Head">
    <location>
        <begin position="2"/>
        <end position="162"/>
    </location>
</feature>
<feature type="region of interest" description="Coil 1A">
    <location>
        <begin position="163"/>
        <end position="198"/>
    </location>
</feature>
<feature type="region of interest" description="Linker 1">
    <location>
        <begin position="199"/>
        <end position="217"/>
    </location>
</feature>
<feature type="region of interest" description="Coil 1B">
    <location>
        <begin position="218"/>
        <end position="309"/>
    </location>
</feature>
<feature type="region of interest" description="Linker 12">
    <location>
        <begin position="310"/>
        <end position="333"/>
    </location>
</feature>
<feature type="region of interest" description="Coil 2">
    <location>
        <begin position="334"/>
        <end position="472"/>
    </location>
</feature>
<feature type="region of interest" description="Tail">
    <location>
        <begin position="473"/>
        <end position="564"/>
    </location>
</feature>
<feature type="compositionally biased region" description="Low complexity" evidence="3">
    <location>
        <begin position="1"/>
        <end position="11"/>
    </location>
</feature>
<feature type="site" description="Stutter">
    <location>
        <position position="414"/>
    </location>
</feature>
<feature type="modified residue" description="N-acetylalanine" evidence="19">
    <location>
        <position position="2"/>
    </location>
</feature>
<feature type="sequence variant" id="VAR_021264" description="In dbSNP:rs17845411." evidence="7">
    <original>N</original>
    <variation>S</variation>
    <location>
        <position position="21"/>
    </location>
</feature>
<feature type="sequence variant" id="VAR_035030" description="In dbSNP:rs681063.">
    <original>G</original>
    <variation>D</variation>
    <location>
        <position position="111"/>
    </location>
</feature>
<feature type="sequence variant" id="VAR_072446" description="In PC3; dbSNP:rs62635293." evidence="12">
    <original>R</original>
    <variation>P</variation>
    <location>
        <position position="164"/>
    </location>
</feature>
<feature type="sequence variant" id="VAR_072447" description="In PC3; dbSNP:rs267607460." evidence="14">
    <original>Q</original>
    <variation>P</variation>
    <location>
        <position position="166"/>
    </location>
</feature>
<feature type="sequence variant" id="VAR_072448" description="In PC3; dbSNP:rs57126929." evidence="10">
    <original>I</original>
    <variation>N</variation>
    <location>
        <position position="167"/>
    </location>
</feature>
<feature type="sequence variant" id="VAR_072449" description="In PC3; dbSNP:rs57448541." evidence="10">
    <original>L</original>
    <variation>F</variation>
    <location>
        <position position="170"/>
    </location>
</feature>
<feature type="sequence variant" id="VAR_072450" description="In PC3; dbSNP:rs62635294." evidence="12 13">
    <original>N</original>
    <variation>D</variation>
    <location>
        <position position="171"/>
    </location>
</feature>
<feature type="sequence variant" id="VAR_072451" description="In PC3; dbSNP:rs59685571." evidence="4 10 14 15">
    <original>N</original>
    <variation>K</variation>
    <location>
        <position position="171"/>
    </location>
</feature>
<feature type="sequence variant" id="VAR_072452" description="In PC3; dbSNP:rs58556099." evidence="10 12 15">
    <original>N</original>
    <variation>S</variation>
    <location>
        <position position="171"/>
    </location>
</feature>
<feature type="sequence variant" id="VAR_072453" description="In PC3; dbSNP:rs62635294." evidence="12">
    <original>N</original>
    <variation>Y</variation>
    <location>
        <position position="171"/>
    </location>
</feature>
<feature type="sequence variant" id="VAR_003878" description="In PC3." evidence="10 18">
    <location>
        <position position="171"/>
    </location>
</feature>
<feature type="sequence variant" id="VAR_072454" description="In PC3." evidence="12 14 15">
    <location>
        <position position="172"/>
    </location>
</feature>
<feature type="sequence variant" id="VAR_072455" description="In PC3; dbSNP:rs61145796." evidence="12">
    <original>F</original>
    <variation>C</variation>
    <location>
        <position position="174"/>
    </location>
</feature>
<feature type="sequence variant" id="VAR_072456" description="In PC3; dbSNP:rs61145796." evidence="4 10 14">
    <original>F</original>
    <variation>S</variation>
    <location>
        <position position="174"/>
    </location>
</feature>
<feature type="sequence variant" id="VAR_017075" description="In PC3; dbSNP:rs28933087." evidence="5">
    <original>F</original>
    <variation>V</variation>
    <location>
        <position position="174"/>
    </location>
</feature>
<feature type="sequence variant" id="VAR_072457" description="In PC3; dbSNP:rs59642296." evidence="10">
    <original>S</original>
    <variation>P</variation>
    <location>
        <position position="176"/>
    </location>
</feature>
<feature type="sequence variant" id="VAR_072458" description="In PC3; dbSNP:rs267607461." evidence="14">
    <original>I</original>
    <variation>N</variation>
    <location>
        <position position="178"/>
    </location>
</feature>
<feature type="sequence variant" id="VAR_072459" description="In PC3; dbSNP:rs57629991." evidence="10">
    <original>I</original>
    <variation>N</variation>
    <location>
        <position position="462"/>
    </location>
</feature>
<feature type="sequence variant" id="VAR_072460" description="In PC3; dbSNP:rs57629991." evidence="6">
    <original>I</original>
    <variation>S</variation>
    <location>
        <position position="462"/>
    </location>
</feature>
<feature type="sequence variant" id="VAR_072461" description="In PC3; dbSNP:rs267607462." evidence="14">
    <original>A</original>
    <variation>P</variation>
    <location>
        <position position="463"/>
    </location>
</feature>
<feature type="sequence variant" id="VAR_072462" description="In PC3; dbSNP:rs61293647." evidence="9">
    <original>T</original>
    <variation>P</variation>
    <location>
        <position position="464"/>
    </location>
</feature>
<feature type="sequence variant" id="VAR_072463" description="In PC3; dbSNP:rs267607463." evidence="13">
    <original>Y</original>
    <variation>H</variation>
    <location>
        <position position="465"/>
    </location>
</feature>
<feature type="sequence variant" id="VAR_072464" description="In PC3." evidence="14">
    <original>Y</original>
    <variation>S</variation>
    <location>
        <position position="465"/>
    </location>
</feature>
<feature type="sequence variant" id="VAR_072465" description="In PC3; dbSNP:rs59018888." evidence="10 15">
    <original>L</original>
    <variation>P</variation>
    <location>
        <position position="468"/>
    </location>
</feature>
<feature type="sequence variant" id="VAR_072466" description="In PC3; dbSNP:rs59018888." evidence="11">
    <original>L</original>
    <variation>Q</variation>
    <location>
        <position position="468"/>
    </location>
</feature>
<feature type="sequence variant" id="VAR_072467" description="In PC3; dbSNP:rs57052654." evidence="10 12">
    <original>L</original>
    <variation>P</variation>
    <location>
        <position position="469"/>
    </location>
</feature>
<feature type="sequence variant" id="VAR_017076" description="In PC3; dbSNP:rs57052654." evidence="5 12">
    <original>L</original>
    <variation>R</variation>
    <location>
        <position position="469"/>
    </location>
</feature>
<feature type="sequence variant" id="VAR_017077" description="In PC3; dbSNP:rs60554162." evidence="5 12">
    <original>E</original>
    <variation>K</variation>
    <location>
        <position position="472"/>
    </location>
</feature>
<feature type="sequence conflict" description="In Ref. 1; AAB60696." evidence="20" ref="1">
    <original>E</original>
    <variation>D</variation>
    <location>
        <position position="192"/>
    </location>
</feature>
<feature type="sequence conflict" description="In Ref. 1; AAB60696." evidence="20" ref="1">
    <original>G</original>
    <variation>N</variation>
    <location>
        <position position="241"/>
    </location>
</feature>
<feature type="sequence conflict" description="In Ref. 1; AAB60696." evidence="20" ref="1">
    <original>F</original>
    <variation>L</variation>
    <location>
        <position position="249"/>
    </location>
</feature>
<feature type="sequence conflict" description="In Ref. 5; CAA24760." evidence="20" ref="5">
    <original>I</original>
    <variation>S</variation>
    <location>
        <position position="395"/>
    </location>
</feature>
<feature type="sequence conflict" description="In Ref. 1; AAB60696." evidence="20" ref="1">
    <original>N</original>
    <variation>S</variation>
    <location>
        <position position="404"/>
    </location>
</feature>
<feature type="sequence conflict" description="In Ref. 3; AAH69269." evidence="20" ref="3">
    <original>R</original>
    <variation>W</variation>
    <location>
        <position position="443"/>
    </location>
</feature>
<feature type="sequence conflict" description="In Ref. 1; AAB60696." evidence="20" ref="1">
    <original>I</original>
    <variation>V</variation>
    <location>
        <position position="486"/>
    </location>
</feature>
<feature type="helix" evidence="21">
    <location>
        <begin position="539"/>
        <end position="541"/>
    </location>
</feature>
<feature type="helix" evidence="21">
    <location>
        <begin position="547"/>
        <end position="549"/>
    </location>
</feature>
<accession>P02538</accession>
<accession>A4QPC1</accession>
<accession>P48667</accession>
<accession>Q08AR4</accession>
<accession>Q6NT67</accession>
<accession>Q96CL4</accession>
<dbReference type="EMBL" id="L42583">
    <property type="protein sequence ID" value="AAC41767.1"/>
    <property type="molecule type" value="Genomic_DNA"/>
</dbReference>
<dbReference type="EMBL" id="L42575">
    <property type="protein sequence ID" value="AAC41767.1"/>
    <property type="status" value="JOINED"/>
    <property type="molecule type" value="Genomic_DNA"/>
</dbReference>
<dbReference type="EMBL" id="L42576">
    <property type="protein sequence ID" value="AAC41767.1"/>
    <property type="status" value="JOINED"/>
    <property type="molecule type" value="Genomic_DNA"/>
</dbReference>
<dbReference type="EMBL" id="L42577">
    <property type="protein sequence ID" value="AAC41767.1"/>
    <property type="status" value="JOINED"/>
    <property type="molecule type" value="Genomic_DNA"/>
</dbReference>
<dbReference type="EMBL" id="L42578">
    <property type="protein sequence ID" value="AAC41767.1"/>
    <property type="status" value="JOINED"/>
    <property type="molecule type" value="Genomic_DNA"/>
</dbReference>
<dbReference type="EMBL" id="L42579">
    <property type="protein sequence ID" value="AAC41767.1"/>
    <property type="status" value="JOINED"/>
    <property type="molecule type" value="Genomic_DNA"/>
</dbReference>
<dbReference type="EMBL" id="L42580">
    <property type="protein sequence ID" value="AAC41767.1"/>
    <property type="status" value="JOINED"/>
    <property type="molecule type" value="Genomic_DNA"/>
</dbReference>
<dbReference type="EMBL" id="L42581">
    <property type="protein sequence ID" value="AAC41767.1"/>
    <property type="status" value="JOINED"/>
    <property type="molecule type" value="Genomic_DNA"/>
</dbReference>
<dbReference type="EMBL" id="AH005420">
    <property type="protein sequence ID" value="AAB60696.1"/>
    <property type="molecule type" value="Genomic_DNA"/>
</dbReference>
<dbReference type="EMBL" id="BT006899">
    <property type="protein sequence ID" value="AAP35545.1"/>
    <property type="molecule type" value="mRNA"/>
</dbReference>
<dbReference type="EMBL" id="BC008807">
    <property type="protein sequence ID" value="AAH08807.1"/>
    <property type="molecule type" value="mRNA"/>
</dbReference>
<dbReference type="EMBL" id="BC014152">
    <property type="protein sequence ID" value="AAH14152.1"/>
    <property type="molecule type" value="mRNA"/>
</dbReference>
<dbReference type="EMBL" id="BC069269">
    <property type="protein sequence ID" value="AAH69269.1"/>
    <property type="molecule type" value="mRNA"/>
</dbReference>
<dbReference type="EMBL" id="BC125058">
    <property type="protein sequence ID" value="AAI25059.1"/>
    <property type="molecule type" value="mRNA"/>
</dbReference>
<dbReference type="EMBL" id="BC139753">
    <property type="protein sequence ID" value="AAI39754.1"/>
    <property type="molecule type" value="mRNA"/>
</dbReference>
<dbReference type="EMBL" id="V01516">
    <property type="protein sequence ID" value="CAA24760.1"/>
    <property type="molecule type" value="Genomic_DNA"/>
</dbReference>
<dbReference type="CCDS" id="CCDS41786.1"/>
<dbReference type="PIR" id="A57398">
    <property type="entry name" value="KRHUEA"/>
</dbReference>
<dbReference type="PIR" id="I61769">
    <property type="entry name" value="I61769"/>
</dbReference>
<dbReference type="RefSeq" id="NP_005545.1">
    <property type="nucleotide sequence ID" value="NM_005554.4"/>
</dbReference>
<dbReference type="PDB" id="5KI0">
    <property type="method" value="NMR"/>
    <property type="chains" value="A=533-551"/>
</dbReference>
<dbReference type="PDBsum" id="5KI0"/>
<dbReference type="SMR" id="P02538"/>
<dbReference type="BioGRID" id="110051">
    <property type="interactions" value="154"/>
</dbReference>
<dbReference type="CORUM" id="P02538"/>
<dbReference type="DIP" id="DIP-533N"/>
<dbReference type="FunCoup" id="P02538">
    <property type="interactions" value="34"/>
</dbReference>
<dbReference type="IntAct" id="P02538">
    <property type="interactions" value="70"/>
</dbReference>
<dbReference type="MINT" id="P02538"/>
<dbReference type="STRING" id="9606.ENSP00000369317"/>
<dbReference type="DrugBank" id="DB01593">
    <property type="generic name" value="Zinc"/>
</dbReference>
<dbReference type="DrugBank" id="DB14487">
    <property type="generic name" value="Zinc acetate"/>
</dbReference>
<dbReference type="Allergome" id="3326">
    <property type="allergen name" value="Hom s 5.0101"/>
</dbReference>
<dbReference type="Allergome" id="415">
    <property type="allergen name" value="Hom s 5"/>
</dbReference>
<dbReference type="GlyGen" id="P02538">
    <property type="glycosylation" value="2 sites, 1 O-linked glycan (1 site)"/>
</dbReference>
<dbReference type="iPTMnet" id="P02538"/>
<dbReference type="PhosphoSitePlus" id="P02538"/>
<dbReference type="SwissPalm" id="P02538"/>
<dbReference type="BioMuta" id="KRT6A"/>
<dbReference type="DMDM" id="1346344"/>
<dbReference type="jPOST" id="P02538"/>
<dbReference type="MassIVE" id="P02538"/>
<dbReference type="PaxDb" id="9606-ENSP00000369317"/>
<dbReference type="PeptideAtlas" id="P02538"/>
<dbReference type="PRIDE" id="P02538"/>
<dbReference type="ProteomicsDB" id="51529"/>
<dbReference type="TopDownProteomics" id="P02538"/>
<dbReference type="Antibodypedia" id="7850">
    <property type="antibodies" value="674 antibodies from 36 providers"/>
</dbReference>
<dbReference type="DNASU" id="3853"/>
<dbReference type="Ensembl" id="ENST00000330722.7">
    <property type="protein sequence ID" value="ENSP00000369317.3"/>
    <property type="gene ID" value="ENSG00000205420.11"/>
</dbReference>
<dbReference type="GeneID" id="3853"/>
<dbReference type="KEGG" id="hsa:3853"/>
<dbReference type="MANE-Select" id="ENST00000330722.7">
    <property type="protein sequence ID" value="ENSP00000369317.3"/>
    <property type="RefSeq nucleotide sequence ID" value="NM_005554.4"/>
    <property type="RefSeq protein sequence ID" value="NP_005545.1"/>
</dbReference>
<dbReference type="UCSC" id="uc001sam.4">
    <property type="organism name" value="human"/>
</dbReference>
<dbReference type="AGR" id="HGNC:6443"/>
<dbReference type="CTD" id="3853"/>
<dbReference type="DisGeNET" id="3853"/>
<dbReference type="GeneCards" id="KRT6A"/>
<dbReference type="GeneReviews" id="KRT6A"/>
<dbReference type="HGNC" id="HGNC:6443">
    <property type="gene designation" value="KRT6A"/>
</dbReference>
<dbReference type="HPA" id="ENSG00000205420">
    <property type="expression patterns" value="Group enriched (cervix, esophagus, vagina)"/>
</dbReference>
<dbReference type="MalaCards" id="KRT6A"/>
<dbReference type="MIM" id="148041">
    <property type="type" value="gene"/>
</dbReference>
<dbReference type="MIM" id="615726">
    <property type="type" value="phenotype"/>
</dbReference>
<dbReference type="neXtProt" id="NX_P02538"/>
<dbReference type="OpenTargets" id="ENSG00000205420"/>
<dbReference type="Orphanet" id="2309">
    <property type="disease" value="Pachyonychia congenita"/>
</dbReference>
<dbReference type="PharmGKB" id="PA30231"/>
<dbReference type="VEuPathDB" id="HostDB:ENSG00000205420"/>
<dbReference type="eggNOG" id="ENOG502QURK">
    <property type="taxonomic scope" value="Eukaryota"/>
</dbReference>
<dbReference type="GeneTree" id="ENSGT00940000154600"/>
<dbReference type="HOGENOM" id="CLU_012560_6_1_1"/>
<dbReference type="InParanoid" id="P02538"/>
<dbReference type="OMA" id="RWVHDAM"/>
<dbReference type="OrthoDB" id="9538521at2759"/>
<dbReference type="PAN-GO" id="P02538">
    <property type="GO annotations" value="4 GO annotations based on evolutionary models"/>
</dbReference>
<dbReference type="PhylomeDB" id="P02538"/>
<dbReference type="TreeFam" id="TF317854"/>
<dbReference type="PathwayCommons" id="P02538"/>
<dbReference type="Reactome" id="R-HSA-6805567">
    <property type="pathway name" value="Keratinization"/>
</dbReference>
<dbReference type="Reactome" id="R-HSA-6809371">
    <property type="pathway name" value="Formation of the cornified envelope"/>
</dbReference>
<dbReference type="SignaLink" id="P02538"/>
<dbReference type="BioGRID-ORCS" id="3853">
    <property type="hits" value="36 hits in 1081 CRISPR screens"/>
</dbReference>
<dbReference type="ChiTaRS" id="KRT6A">
    <property type="organism name" value="human"/>
</dbReference>
<dbReference type="GeneWiki" id="Keratin_6A"/>
<dbReference type="GenomeRNAi" id="3853"/>
<dbReference type="Pharos" id="P02538">
    <property type="development level" value="Tbio"/>
</dbReference>
<dbReference type="PRO" id="PR:P02538"/>
<dbReference type="Proteomes" id="UP000005640">
    <property type="component" value="Chromosome 12"/>
</dbReference>
<dbReference type="RNAct" id="P02538">
    <property type="molecule type" value="protein"/>
</dbReference>
<dbReference type="Bgee" id="ENSG00000205420">
    <property type="expression patterns" value="Expressed in gingival epithelium and 113 other cell types or tissues"/>
</dbReference>
<dbReference type="ExpressionAtlas" id="P02538">
    <property type="expression patterns" value="baseline and differential"/>
</dbReference>
<dbReference type="GO" id="GO:0005829">
    <property type="term" value="C:cytosol"/>
    <property type="evidence" value="ECO:0000304"/>
    <property type="project" value="Reactome"/>
</dbReference>
<dbReference type="GO" id="GO:0070062">
    <property type="term" value="C:extracellular exosome"/>
    <property type="evidence" value="ECO:0007005"/>
    <property type="project" value="UniProtKB"/>
</dbReference>
<dbReference type="GO" id="GO:0045095">
    <property type="term" value="C:keratin filament"/>
    <property type="evidence" value="ECO:0000318"/>
    <property type="project" value="GO_Central"/>
</dbReference>
<dbReference type="GO" id="GO:0016020">
    <property type="term" value="C:membrane"/>
    <property type="evidence" value="ECO:0007005"/>
    <property type="project" value="UniProtKB"/>
</dbReference>
<dbReference type="GO" id="GO:0005634">
    <property type="term" value="C:nucleus"/>
    <property type="evidence" value="ECO:0007005"/>
    <property type="project" value="UniProtKB"/>
</dbReference>
<dbReference type="GO" id="GO:0005200">
    <property type="term" value="F:structural constituent of cytoskeleton"/>
    <property type="evidence" value="ECO:0000303"/>
    <property type="project" value="UniProtKB"/>
</dbReference>
<dbReference type="GO" id="GO:0030280">
    <property type="term" value="F:structural constituent of skin epidermis"/>
    <property type="evidence" value="ECO:0000318"/>
    <property type="project" value="GO_Central"/>
</dbReference>
<dbReference type="GO" id="GO:0061844">
    <property type="term" value="P:antimicrobial humoral immune response mediated by antimicrobial peptide"/>
    <property type="evidence" value="ECO:0000314"/>
    <property type="project" value="UniProtKB"/>
</dbReference>
<dbReference type="GO" id="GO:0030154">
    <property type="term" value="P:cell differentiation"/>
    <property type="evidence" value="ECO:0000303"/>
    <property type="project" value="UniProtKB"/>
</dbReference>
<dbReference type="GO" id="GO:0050830">
    <property type="term" value="P:defense response to Gram-positive bacterium"/>
    <property type="evidence" value="ECO:0000314"/>
    <property type="project" value="UniProtKB"/>
</dbReference>
<dbReference type="GO" id="GO:0045109">
    <property type="term" value="P:intermediate filament organization"/>
    <property type="evidence" value="ECO:0000318"/>
    <property type="project" value="GO_Central"/>
</dbReference>
<dbReference type="GO" id="GO:0031424">
    <property type="term" value="P:keratinization"/>
    <property type="evidence" value="ECO:0000318"/>
    <property type="project" value="GO_Central"/>
</dbReference>
<dbReference type="GO" id="GO:0031640">
    <property type="term" value="P:killing of cells of another organism"/>
    <property type="evidence" value="ECO:0000314"/>
    <property type="project" value="UniProtKB"/>
</dbReference>
<dbReference type="GO" id="GO:0002009">
    <property type="term" value="P:morphogenesis of an epithelium"/>
    <property type="evidence" value="ECO:0000250"/>
    <property type="project" value="UniProtKB"/>
</dbReference>
<dbReference type="GO" id="GO:2000536">
    <property type="term" value="P:negative regulation of entry of bacterium into host cell"/>
    <property type="evidence" value="ECO:0000314"/>
    <property type="project" value="UniProtKB"/>
</dbReference>
<dbReference type="GO" id="GO:0008284">
    <property type="term" value="P:positive regulation of cell population proliferation"/>
    <property type="evidence" value="ECO:0000303"/>
    <property type="project" value="UniProtKB"/>
</dbReference>
<dbReference type="GO" id="GO:0042060">
    <property type="term" value="P:wound healing"/>
    <property type="evidence" value="ECO:0000250"/>
    <property type="project" value="UniProtKB"/>
</dbReference>
<dbReference type="FunFam" id="1.20.5.1160:FF:000001">
    <property type="entry name" value="Keratin type II"/>
    <property type="match status" value="1"/>
</dbReference>
<dbReference type="FunFam" id="1.20.5.170:FF:000004">
    <property type="entry name" value="Keratin, type II cytoskeletal 5"/>
    <property type="match status" value="1"/>
</dbReference>
<dbReference type="FunFam" id="1.20.5.500:FF:000001">
    <property type="entry name" value="Type II keratin 23"/>
    <property type="match status" value="1"/>
</dbReference>
<dbReference type="Gene3D" id="1.20.5.170">
    <property type="match status" value="1"/>
</dbReference>
<dbReference type="Gene3D" id="1.20.5.500">
    <property type="entry name" value="Single helix bin"/>
    <property type="match status" value="1"/>
</dbReference>
<dbReference type="Gene3D" id="1.20.5.1160">
    <property type="entry name" value="Vasodilator-stimulated phosphoprotein"/>
    <property type="match status" value="1"/>
</dbReference>
<dbReference type="InterPro" id="IPR018039">
    <property type="entry name" value="IF_conserved"/>
</dbReference>
<dbReference type="InterPro" id="IPR039008">
    <property type="entry name" value="IF_rod_dom"/>
</dbReference>
<dbReference type="InterPro" id="IPR032444">
    <property type="entry name" value="Keratin_2_head"/>
</dbReference>
<dbReference type="InterPro" id="IPR003054">
    <property type="entry name" value="Keratin_II"/>
</dbReference>
<dbReference type="PANTHER" id="PTHR45616">
    <property type="entry name" value="GATA-TYPE DOMAIN-CONTAINING PROTEIN"/>
    <property type="match status" value="1"/>
</dbReference>
<dbReference type="PANTHER" id="PTHR45616:SF39">
    <property type="entry name" value="KERATIN, TYPE II CYTOSKELETAL 6A-RELATED"/>
    <property type="match status" value="1"/>
</dbReference>
<dbReference type="Pfam" id="PF00038">
    <property type="entry name" value="Filament"/>
    <property type="match status" value="1"/>
</dbReference>
<dbReference type="Pfam" id="PF16208">
    <property type="entry name" value="Keratin_2_head"/>
    <property type="match status" value="1"/>
</dbReference>
<dbReference type="PRINTS" id="PR01276">
    <property type="entry name" value="TYPE2KERATIN"/>
</dbReference>
<dbReference type="SMART" id="SM01391">
    <property type="entry name" value="Filament"/>
    <property type="match status" value="1"/>
</dbReference>
<dbReference type="SUPFAM" id="SSF64593">
    <property type="entry name" value="Intermediate filament protein, coiled coil region"/>
    <property type="match status" value="3"/>
</dbReference>
<dbReference type="PROSITE" id="PS00226">
    <property type="entry name" value="IF_ROD_1"/>
    <property type="match status" value="1"/>
</dbReference>
<dbReference type="PROSITE" id="PS51842">
    <property type="entry name" value="IF_ROD_2"/>
    <property type="match status" value="1"/>
</dbReference>
<sequence length="564" mass="60045">MASTSTTIRSHSSSRRGFSANSARLPGVSRSGFSSVSVSRSRGSGGLGGACGGAGFGSRSLYGLGGSKRISIGGGSCAISGGYGSRAGGSYGFGGAGSGFGFGGGAGIGFGLGGGAGLAGGFGGPGFPVCPPGGIQEVTVNQSLLTPLNLQIDPTIQRVRAEEREQIKTLNNKFASFIDKVRFLEQQNKVLETKWTLLQEQGTKTVRQNLEPLFEQYINNLRRQLDSIVGERGRLDSELRGMQDLVEDFKNKYEDEINKRTAAENEFVTLKKDVDAAYMNKVELQAKADTLTDEINFLRALYDAELSQMQTHISDTSVVLSMDNNRNLDLDSIIAEVKAQYEEIAQRSRAEAESWYQTKYEELQVTAGRHGDDLRNTKQEIAEINRMIQRLRSEIDHVKKQCANLQAAIADAEQRGEMALKDAKNKLEGLEDALQKAKQDLARLLKEYQELMNVKLALDVEIATYRKLLEGEECRLNGEGVGQVNISVVQSTVSSGYGGASGVGSGLGLGGGSSYSYGSGLGVGGGFSSSSGRAIGGGLSSVGGGSSTIKYTTTSSSSRKSYKH</sequence>
<reference key="1">
    <citation type="journal article" date="1995" name="J. Biol. Chem.">
        <title>Cloning and characterization of multiple human genes and cDNAs encoding highly related type II keratin 6 isoforms.</title>
        <authorList>
            <person name="Takahashi K."/>
            <person name="Paladini R.D."/>
            <person name="Coulombe P.A."/>
        </authorList>
    </citation>
    <scope>NUCLEOTIDE SEQUENCE [GENOMIC DNA]</scope>
    <source>
        <tissue>Skin</tissue>
    </source>
</reference>
<reference key="2">
    <citation type="submission" date="2003-05" db="EMBL/GenBank/DDBJ databases">
        <title>Cloning of human full-length CDSs in BD Creator(TM) system donor vector.</title>
        <authorList>
            <person name="Kalnine N."/>
            <person name="Chen X."/>
            <person name="Rolfs A."/>
            <person name="Halleck A."/>
            <person name="Hines L."/>
            <person name="Eisenstein S."/>
            <person name="Koundinya M."/>
            <person name="Raphael J."/>
            <person name="Moreira D."/>
            <person name="Kelley T."/>
            <person name="LaBaer J."/>
            <person name="Lin Y."/>
            <person name="Phelan M."/>
            <person name="Farmer A."/>
        </authorList>
    </citation>
    <scope>NUCLEOTIDE SEQUENCE [LARGE SCALE MRNA]</scope>
</reference>
<reference key="3">
    <citation type="journal article" date="2004" name="Genome Res.">
        <title>The status, quality, and expansion of the NIH full-length cDNA project: the Mammalian Gene Collection (MGC).</title>
        <authorList>
            <consortium name="The MGC Project Team"/>
        </authorList>
    </citation>
    <scope>NUCLEOTIDE SEQUENCE [LARGE SCALE MRNA]</scope>
    <scope>VARIANT SER-21</scope>
    <source>
        <tissue>Brain</tissue>
        <tissue>Ovary</tissue>
        <tissue>Pancreas</tissue>
    </source>
</reference>
<reference key="4">
    <citation type="submission" date="2008-03" db="UniProtKB">
        <authorList>
            <person name="Bienvenut W.V."/>
            <person name="Vousden K.H."/>
            <person name="Lukashchuk N."/>
            <person name="Lilla S."/>
            <person name="Lange E."/>
            <person name="Sumpton D.P."/>
        </authorList>
    </citation>
    <scope>PROTEIN SEQUENCE OF 2-9; 31-40; 43-86; 169-204; 208-232; 241-347; 350-369; 379-386; 425-436; 447-475 AND 534-550</scope>
    <scope>CLEAVAGE OF INITIATOR METHIONINE</scope>
    <scope>ACETYLATION AT ALA-2</scope>
    <scope>IDENTIFICATION BY MASS SPECTROMETRY</scope>
    <source>
        <tissue>Lung carcinoma</tissue>
    </source>
</reference>
<reference key="5">
    <citation type="journal article" date="1983" name="Cell">
        <title>The cDNA sequence of a type II cytoskeletal keratin reveals constant and variable structural domains among keratins.</title>
        <authorList>
            <person name="Hanukoglu I."/>
            <person name="Fuchs E."/>
        </authorList>
    </citation>
    <scope>NUCLEOTIDE SEQUENCE [MRNA] OF 208-564</scope>
</reference>
<reference key="6">
    <citation type="journal article" date="2005" name="J. Cell Sci.">
        <title>Identification of trichoplein, a novel keratin filament-binding protein.</title>
        <authorList>
            <person name="Nishizawa M."/>
            <person name="Izawa I."/>
            <person name="Inoko A."/>
            <person name="Hayashi Y."/>
            <person name="Nagata K."/>
            <person name="Yokoyama T."/>
            <person name="Usukura J."/>
            <person name="Inagaki M."/>
        </authorList>
    </citation>
    <scope>INTERACTION WITH TCHP</scope>
</reference>
<reference key="7">
    <citation type="journal article" date="2011" name="BMC Syst. Biol.">
        <title>Initial characterization of the human central proteome.</title>
        <authorList>
            <person name="Burkard T.R."/>
            <person name="Planyavsky M."/>
            <person name="Kaupe I."/>
            <person name="Breitwieser F.P."/>
            <person name="Buerckstuemmer T."/>
            <person name="Bennett K.L."/>
            <person name="Superti-Furga G."/>
            <person name="Colinge J."/>
        </authorList>
    </citation>
    <scope>IDENTIFICATION BY MASS SPECTROMETRY [LARGE SCALE ANALYSIS]</scope>
</reference>
<reference key="8">
    <citation type="journal article" date="2012" name="Eur. J. Dermatol.">
        <title>Two novel de novo mutations of KRT6A and KRT16 genes in two Chinese pachyonychia congenita pedigrees with fissured tongue or diffuse plantar keratoderma.</title>
        <authorList>
            <person name="Du Z.F."/>
            <person name="Xu C.M."/>
            <person name="Zhao Y."/>
            <person name="Liu W.T."/>
            <person name="Chen X.L."/>
            <person name="Chen C.Y."/>
            <person name="Fang H."/>
            <person name="Ke H.P."/>
            <person name="Zhang X.N."/>
        </authorList>
    </citation>
    <scope>INVOLVEMENT IN PC3</scope>
</reference>
<reference key="9">
    <citation type="journal article" date="2014" name="J. Proteomics">
        <title>An enzyme assisted RP-RPLC approach for in-depth analysis of human liver phosphoproteome.</title>
        <authorList>
            <person name="Bian Y."/>
            <person name="Song C."/>
            <person name="Cheng K."/>
            <person name="Dong M."/>
            <person name="Wang F."/>
            <person name="Huang J."/>
            <person name="Sun D."/>
            <person name="Wang L."/>
            <person name="Ye M."/>
            <person name="Zou H."/>
        </authorList>
    </citation>
    <scope>IDENTIFICATION BY MASS SPECTROMETRY [LARGE SCALE ANALYSIS]</scope>
    <source>
        <tissue>Liver</tissue>
    </source>
</reference>
<reference key="10">
    <citation type="journal article" date="2016" name="Hum. Mol. Genet.">
        <title>Keratin 12 missense mutation induces the unfolded protein response and apoptosis in Meesmann epithelial corneal dystrophy.</title>
        <authorList>
            <person name="Allen E.H."/>
            <person name="Courtney D.G."/>
            <person name="Atkinson S.D."/>
            <person name="Moore J.E."/>
            <person name="Mairs L."/>
            <person name="Poulsen E.T."/>
            <person name="Schiroli D."/>
            <person name="Maurizi E."/>
            <person name="Cole C."/>
            <person name="Hickerson R.P."/>
            <person name="James J."/>
            <person name="Murgatroyd H."/>
            <person name="Smith F.J."/>
            <person name="MacEwen C."/>
            <person name="Enghild J.J."/>
            <person name="Nesbit M.A."/>
            <person name="Leslie Pedrioli D.M."/>
            <person name="McLean W.H."/>
            <person name="Moore C.B."/>
        </authorList>
    </citation>
    <scope>TISSUE SPECIFICITY</scope>
</reference>
<reference key="11">
    <citation type="journal article" date="1995" name="Nat. Genet.">
        <title>Mutation of a type II keratin gene (K6a) in pachyonychia congenita.</title>
        <authorList>
            <person name="Bowden P.E."/>
            <person name="Haley J.L."/>
            <person name="Kansky A."/>
            <person name="Rothnagel J.A."/>
            <person name="Jones D.O."/>
            <person name="Turner R.J."/>
        </authorList>
    </citation>
    <scope>VARIANT PC3 ASN-171 DEL</scope>
</reference>
<reference key="12">
    <citation type="journal article" date="1999" name="Exp. Dermatol.">
        <title>A mutation detection strategy for the human keratin 6A gene and novel missense mutations in two cases of pachyonychia congenita type 1.</title>
        <authorList>
            <person name="Smith F.J."/>
            <person name="McKenna K.E."/>
            <person name="Irvine A.D."/>
            <person name="Bingham E.A."/>
            <person name="Coleman C.M."/>
            <person name="Uitto J."/>
            <person name="McLean W.H."/>
        </authorList>
    </citation>
    <scope>VARIANTS PC3 LYS-171 AND SER-174</scope>
</reference>
<reference key="13">
    <citation type="journal article" date="2001" name="J. Invest. Dermatol.">
        <title>Novel and recurrent mutations in the genes encoding keratins K6a, K16 and K17 in 13 cases of pachyonychia congenita.</title>
        <authorList>
            <person name="Terrinoni A."/>
            <person name="Smith F.J.D."/>
            <person name="Didona B."/>
            <person name="Canzona F."/>
            <person name="Paradisi M."/>
            <person name="Huber M."/>
            <person name="Hohl D."/>
            <person name="David A."/>
            <person name="Verloes A."/>
            <person name="Leigh I.M."/>
            <person name="Munro C.S."/>
            <person name="Melino G."/>
            <person name="McLean W.H.I."/>
        </authorList>
    </citation>
    <scope>VARIANTS PC3 VAL-174; ARG-469 AND LYS-472</scope>
</reference>
<reference key="14">
    <citation type="journal article" date="2004" name="Zhonghua Yi Xue Za Zhi">
        <title>[A de nono I462S mutation in the KRT6A gene is associated with pachyonychia congenita type I].</title>
        <authorList>
            <person name="Kang X.J."/>
            <person name="Sun M."/>
            <person name="Yang W."/>
            <person name="Yu M."/>
            <person name="Ju Q."/>
            <person name="Lo W.H."/>
            <person name="Xia L.Q."/>
            <person name="Zhang X."/>
        </authorList>
    </citation>
    <scope>VARIANT PC3 SER-462</scope>
</reference>
<reference key="15">
    <citation type="journal article" date="2005" name="Br. J. Dermatol.">
        <title>A severe case of pachyonychia congenita type I due to a novel proline mutation in keratin 6a.</title>
        <authorList>
            <person name="Garcia-Rio I."/>
            <person name="Penas P.F."/>
            <person name="Garcia-Diez A."/>
            <person name="McLean W.H."/>
            <person name="Smith F.J."/>
        </authorList>
    </citation>
    <scope>VARIANT PC3 PRO-464</scope>
</reference>
<reference key="16">
    <citation type="journal article" date="2005" name="J. Investig. Dermatol. Symp. Proc.">
        <title>The genetic basis of pachyonychia congenita.</title>
        <authorList>
            <person name="Smith F.J."/>
            <person name="Liao H."/>
            <person name="Cassidy A.J."/>
            <person name="Stewart A."/>
            <person name="Hamill K.J."/>
            <person name="Wood P."/>
            <person name="Joval I."/>
            <person name="van Steensel M.A."/>
            <person name="Bjoerck E."/>
            <person name="Callif-Daley F."/>
            <person name="Pals G."/>
            <person name="Collins P."/>
            <person name="Leachman S.A."/>
            <person name="Munro C.S."/>
            <person name="McLean W.H."/>
        </authorList>
    </citation>
    <scope>VARIANTS PC3 ASN-167; PHE-170; LYS-171; ASN-171 DEL; SER-171; SER-174; PRO-176; ASN-462; PRO-468 AND PRO-469</scope>
</reference>
<reference key="17">
    <citation type="journal article" date="2007" name="J. Dermatol. Sci.">
        <title>A spectrum of mutations in keratins K6a, K16 and K17 causing pachyonychia congenita.</title>
        <authorList>
            <person name="Liao H."/>
            <person name="Sayers J.M."/>
            <person name="Wilson N.J."/>
            <person name="Irvine A.D."/>
            <person name="Mellerio J.E."/>
            <person name="Baselga E."/>
            <person name="Bayliss S.J."/>
            <person name="Uliana V."/>
            <person name="Fimiani M."/>
            <person name="Lane E.B."/>
            <person name="McLean W.H."/>
            <person name="Leachman S.A."/>
            <person name="Smith F.J."/>
        </authorList>
    </citation>
    <scope>VARIANTS PC3 PRO-164; ASP-171; SER-171; TYR-171; ASN-172 DEL; CYS-174; ARG-469; PRO-469 AND LYS-472</scope>
</reference>
<reference key="18">
    <citation type="journal article" date="2007" name="J. Eur. Acad. Dermatol. Venereol.">
        <title>A novel missense mutation L468Q of keratin 6a in pachyonychia congenita type 1.</title>
        <authorList>
            <person name="Zhou H.L."/>
            <person name="Yang S."/>
            <person name="Gao M."/>
            <person name="Zhao X.Y."/>
            <person name="Zhu Y.G."/>
            <person name="Li W."/>
            <person name="Ren Y.Q."/>
            <person name="Liang Y.H."/>
            <person name="Du W.H."/>
            <person name="Zhang X.J."/>
        </authorList>
    </citation>
    <scope>VARIANT PC3 GLN-468</scope>
</reference>
<reference key="19">
    <citation type="journal article" date="2008" name="Br. J. Dermatol.">
        <title>Mutations of KRT6A are more frequent than those of KRT16 in pachyonychia congenita type 1: report of a novel and a recently reported mutation in two unrelated Chinese families.</title>
        <authorList>
            <person name="Bai Z.L."/>
            <person name="Feng Y.G."/>
            <person name="Tan S.S."/>
            <person name="Wang X.Y."/>
            <person name="Xiao S.X."/>
            <person name="Wang H."/>
            <person name="Jia H.Q."/>
            <person name="Wu J.W."/>
            <person name="He D.L."/>
            <person name="Kang R.H."/>
        </authorList>
    </citation>
    <scope>VARIANTS PC3 ASP-171 AND HIS-465</scope>
</reference>
<reference key="20">
    <citation type="journal article" date="2009" name="Br. J. Dermatol.">
        <title>Novel and recurrent keratin 6A (KRT6A) mutations in Chinese patients with pachyonychia congenita type 1.</title>
        <authorList>
            <person name="Lv Y.M."/>
            <person name="Yang S."/>
            <person name="Zhang Z."/>
            <person name="Cui Y."/>
            <person name="Quan C."/>
            <person name="Zhou F.S."/>
            <person name="Fang Q.Y."/>
            <person name="Du W.H."/>
            <person name="Zhang F.R."/>
            <person name="Chang J.M."/>
            <person name="Tao X.P."/>
            <person name="Zhang A.L."/>
            <person name="Kang R.H."/>
            <person name="Du W.D."/>
            <person name="Zhang X.J."/>
        </authorList>
    </citation>
    <scope>VARIANTS PC3 PRO-166; LYS-171; ASN-172 DEL; SER-174; ASN-178; PRO-463 AND SER-465</scope>
</reference>
<reference key="21">
    <citation type="journal article" date="2011" name="J. Invest. Dermatol.">
        <title>A large mutational study in pachyonychia congenita.</title>
        <authorList>
            <person name="Wilson N.J."/>
            <person name="Leachman S.A."/>
            <person name="Hansen C.D."/>
            <person name="McMullan A.C."/>
            <person name="Milstone L.M."/>
            <person name="Schwartz M.E."/>
            <person name="McLean W.H."/>
            <person name="Hull P.R."/>
            <person name="Smith F.J."/>
        </authorList>
    </citation>
    <scope>VARIANTS PC3 SER-171; LYS-171; ASN-172 DEL AND PRO-468</scope>
</reference>
<organism>
    <name type="scientific">Homo sapiens</name>
    <name type="common">Human</name>
    <dbReference type="NCBI Taxonomy" id="9606"/>
    <lineage>
        <taxon>Eukaryota</taxon>
        <taxon>Metazoa</taxon>
        <taxon>Chordata</taxon>
        <taxon>Craniata</taxon>
        <taxon>Vertebrata</taxon>
        <taxon>Euteleostomi</taxon>
        <taxon>Mammalia</taxon>
        <taxon>Eutheria</taxon>
        <taxon>Euarchontoglires</taxon>
        <taxon>Primates</taxon>
        <taxon>Haplorrhini</taxon>
        <taxon>Catarrhini</taxon>
        <taxon>Hominidae</taxon>
        <taxon>Homo</taxon>
    </lineage>
</organism>
<comment type="function">
    <text evidence="1">Epidermis-specific type I keratin involved in wound healing. Involved in the activation of follicular keratinocytes after wounding, while it does not play a major role in keratinocyte proliferation or migration. Participates in the regulation of epithelial migration by inhibiting the activity of SRC during wound repair.</text>
</comment>
<comment type="subunit">
    <text evidence="1 8">Heterodimer of a type I and a type II keratin. KRT6 isomers associate with KRT16 and/or KRT17 (By similarity). Interacts with TCHP (PubMed:15731013).</text>
</comment>
<comment type="interaction">
    <interactant intactId="EBI-702198">
        <id>P02538</id>
    </interactant>
    <interactant intactId="EBI-745073">
        <id>Q9BXY8</id>
        <label>BEX2</label>
    </interactant>
    <organismsDiffer>false</organismsDiffer>
    <experiments>3</experiments>
</comment>
<comment type="interaction">
    <interactant intactId="EBI-702198">
        <id>P02538</id>
    </interactant>
    <interactant intactId="EBI-739674">
        <id>Q15834</id>
        <label>CCDC85B</label>
    </interactant>
    <organismsDiffer>false</organismsDiffer>
    <experiments>2</experiments>
</comment>
<comment type="interaction">
    <interactant intactId="EBI-702198">
        <id>P02538</id>
    </interactant>
    <interactant intactId="EBI-744104">
        <id>P55040</id>
        <label>GEM</label>
    </interactant>
    <organismsDiffer>false</organismsDiffer>
    <experiments>3</experiments>
</comment>
<comment type="interaction">
    <interactant intactId="EBI-702198">
        <id>P02538</id>
    </interactant>
    <interactant intactId="EBI-618309">
        <id>Q08379</id>
        <label>GOLGA2</label>
    </interactant>
    <organismsDiffer>false</organismsDiffer>
    <experiments>7</experiments>
</comment>
<comment type="interaction">
    <interactant intactId="EBI-702198">
        <id>P02538</id>
    </interactant>
    <interactant intactId="EBI-740220">
        <id>O14964</id>
        <label>HGS</label>
    </interactant>
    <organismsDiffer>false</organismsDiffer>
    <experiments>6</experiments>
</comment>
<comment type="interaction">
    <interactant intactId="EBI-702198">
        <id>P02538</id>
    </interactant>
    <interactant intactId="EBI-11953930">
        <id>F5H3M2</id>
        <label>KIFC3</label>
    </interactant>
    <organismsDiffer>false</organismsDiffer>
    <experiments>4</experiments>
</comment>
<comment type="interaction">
    <interactant intactId="EBI-702198">
        <id>P02538</id>
    </interactant>
    <interactant intactId="EBI-2125614">
        <id>Q9BVG8</id>
        <label>KIFC3</label>
    </interactant>
    <organismsDiffer>false</organismsDiffer>
    <experiments>5</experiments>
</comment>
<comment type="interaction">
    <interactant intactId="EBI-702198">
        <id>P02538</id>
    </interactant>
    <interactant intactId="EBI-14069005">
        <id>Q9BVG8-5</id>
        <label>KIFC3</label>
    </interactant>
    <organismsDiffer>false</organismsDiffer>
    <experiments>3</experiments>
</comment>
<comment type="interaction">
    <interactant intactId="EBI-702198">
        <id>P02538</id>
    </interactant>
    <interactant intactId="EBI-10171552">
        <id>A1A4E9</id>
        <label>KRT13</label>
    </interactant>
    <organismsDiffer>false</organismsDiffer>
    <experiments>5</experiments>
</comment>
<comment type="interaction">
    <interactant intactId="EBI-702198">
        <id>P02538</id>
    </interactant>
    <interactant intactId="EBI-1223876">
        <id>P13646</id>
        <label>KRT13</label>
    </interactant>
    <organismsDiffer>false</organismsDiffer>
    <experiments>8</experiments>
</comment>
<comment type="interaction">
    <interactant intactId="EBI-702198">
        <id>P02538</id>
    </interactant>
    <interactant intactId="EBI-739566">
        <id>P19012</id>
        <label>KRT15</label>
    </interactant>
    <organismsDiffer>false</organismsDiffer>
    <experiments>15</experiments>
</comment>
<comment type="interaction">
    <interactant intactId="EBI-702198">
        <id>P02538</id>
    </interactant>
    <interactant intactId="EBI-356410">
        <id>P08779</id>
        <label>KRT16</label>
    </interactant>
    <organismsDiffer>false</organismsDiffer>
    <experiments>3</experiments>
</comment>
<comment type="interaction">
    <interactant intactId="EBI-702198">
        <id>P02538</id>
    </interactant>
    <interactant intactId="EBI-297888">
        <id>P05783</id>
        <label>KRT18</label>
    </interactant>
    <organismsDiffer>false</organismsDiffer>
    <experiments>3</experiments>
</comment>
<comment type="interaction">
    <interactant intactId="EBI-702198">
        <id>P02538</id>
    </interactant>
    <interactant intactId="EBI-742756">
        <id>P08727</id>
        <label>KRT19</label>
    </interactant>
    <organismsDiffer>false</organismsDiffer>
    <experiments>5</experiments>
</comment>
<comment type="interaction">
    <interactant intactId="EBI-702198">
        <id>P02538</id>
    </interactant>
    <interactant intactId="EBI-11980019">
        <id>Q7Z3Z0</id>
        <label>KRT25</label>
    </interactant>
    <organismsDiffer>false</organismsDiffer>
    <experiments>3</experiments>
</comment>
<comment type="interaction">
    <interactant intactId="EBI-702198">
        <id>P02538</id>
    </interactant>
    <interactant intactId="EBI-12084444">
        <id>Q7Z3Y9</id>
        <label>KRT26</label>
    </interactant>
    <organismsDiffer>false</organismsDiffer>
    <experiments>3</experiments>
</comment>
<comment type="interaction">
    <interactant intactId="EBI-702198">
        <id>P02538</id>
    </interactant>
    <interactant intactId="EBI-3044087">
        <id>Q7Z3Y8</id>
        <label>KRT27</label>
    </interactant>
    <organismsDiffer>false</organismsDiffer>
    <experiments>3</experiments>
</comment>
<comment type="interaction">
    <interactant intactId="EBI-702198">
        <id>P02538</id>
    </interactant>
    <interactant intactId="EBI-11980489">
        <id>Q7Z3Y7</id>
        <label>KRT28</label>
    </interactant>
    <organismsDiffer>false</organismsDiffer>
    <experiments>5</experiments>
</comment>
<comment type="interaction">
    <interactant intactId="EBI-702198">
        <id>P02538</id>
    </interactant>
    <interactant intactId="EBI-948001">
        <id>Q15323</id>
        <label>KRT31</label>
    </interactant>
    <organismsDiffer>false</organismsDiffer>
    <experiments>12</experiments>
</comment>
<comment type="interaction">
    <interactant intactId="EBI-702198">
        <id>P02538</id>
    </interactant>
    <interactant intactId="EBI-1047093">
        <id>O76011</id>
        <label>KRT34</label>
    </interactant>
    <organismsDiffer>false</organismsDiffer>
    <experiments>3</experiments>
</comment>
<comment type="interaction">
    <interactant intactId="EBI-702198">
        <id>P02538</id>
    </interactant>
    <interactant intactId="EBI-1058674">
        <id>Q92764</id>
        <label>KRT35</label>
    </interactant>
    <organismsDiffer>false</organismsDiffer>
    <experiments>3</experiments>
</comment>
<comment type="interaction">
    <interactant intactId="EBI-702198">
        <id>P02538</id>
    </interactant>
    <interactant intactId="EBI-11958506">
        <id>O76013-2</id>
        <label>KRT36</label>
    </interactant>
    <organismsDiffer>false</organismsDiffer>
    <experiments>3</experiments>
</comment>
<comment type="interaction">
    <interactant intactId="EBI-702198">
        <id>P02538</id>
    </interactant>
    <interactant intactId="EBI-1047263">
        <id>O76015</id>
        <label>KRT38</label>
    </interactant>
    <organismsDiffer>false</organismsDiffer>
    <experiments>14</experiments>
</comment>
<comment type="interaction">
    <interactant intactId="EBI-702198">
        <id>P02538</id>
    </interactant>
    <interactant intactId="EBI-10171697">
        <id>Q6A162</id>
        <label>KRT40</label>
    </interactant>
    <organismsDiffer>false</organismsDiffer>
    <experiments>14</experiments>
</comment>
<comment type="interaction">
    <interactant intactId="EBI-702198">
        <id>P02538</id>
    </interactant>
    <interactant intactId="EBI-749635">
        <id>P61601</id>
        <label>NCALD</label>
    </interactant>
    <organismsDiffer>false</organismsDiffer>
    <experiments>3</experiments>
</comment>
<comment type="interaction">
    <interactant intactId="EBI-702198">
        <id>P02538</id>
    </interactant>
    <interactant intactId="EBI-347978">
        <id>P37198</id>
        <label>NUP62</label>
    </interactant>
    <organismsDiffer>false</organismsDiffer>
    <experiments>3</experiments>
</comment>
<comment type="interaction">
    <interactant intactId="EBI-702198">
        <id>P02538</id>
    </interactant>
    <interactant intactId="EBI-395883">
        <id>P07237</id>
        <label>P4HB</label>
    </interactant>
    <organismsDiffer>false</organismsDiffer>
    <experiments>3</experiments>
</comment>
<comment type="interaction">
    <interactant intactId="EBI-702198">
        <id>P02538</id>
    </interactant>
    <interactant intactId="EBI-347996">
        <id>O43765</id>
        <label>SGTA</label>
    </interactant>
    <organismsDiffer>false</organismsDiffer>
    <experiments>3</experiments>
</comment>
<comment type="interaction">
    <interactant intactId="EBI-702198">
        <id>P02538</id>
    </interactant>
    <interactant intactId="EBI-1105213">
        <id>Q9UBB9</id>
        <label>TFIP11</label>
    </interactant>
    <organismsDiffer>false</organismsDiffer>
    <experiments>10</experiments>
</comment>
<comment type="interaction">
    <interactant intactId="EBI-702198">
        <id>P02538</id>
    </interactant>
    <interactant intactId="EBI-740098">
        <id>P36406</id>
        <label>TRIM23</label>
    </interactant>
    <organismsDiffer>false</organismsDiffer>
    <experiments>8</experiments>
</comment>
<comment type="interaction">
    <interactant intactId="EBI-702198">
        <id>P02538</id>
    </interactant>
    <interactant intactId="EBI-2130429">
        <id>Q9BYV2</id>
        <label>TRIM54</label>
    </interactant>
    <organismsDiffer>false</organismsDiffer>
    <experiments>11</experiments>
</comment>
<comment type="interaction">
    <interactant intactId="EBI-702198">
        <id>P02538</id>
    </interactant>
    <interactant intactId="EBI-6116822">
        <id>Q8N3L3</id>
        <label>TXLNB</label>
    </interactant>
    <organismsDiffer>false</organismsDiffer>
    <experiments>3</experiments>
</comment>
<comment type="interaction">
    <interactant intactId="EBI-702198">
        <id>P02538</id>
    </interactant>
    <interactant intactId="EBI-947187">
        <id>Q9UHD9</id>
        <label>UBQLN2</label>
    </interactant>
    <organismsDiffer>false</organismsDiffer>
    <experiments>3</experiments>
</comment>
<comment type="tissue specificity">
    <text evidence="17">Expressed in the corneal epithelium (at protein level).</text>
</comment>
<comment type="disease" evidence="4 5 6 9 10 11 12 13 14 15 16 18">
    <disease id="DI-04094">
        <name>Pachyonychia congenita 3</name>
        <acronym>PC3</acronym>
        <description>An autosomal dominant genodermatosis characterized by hypertrophic nail dystrophy, painful and highly debilitating plantar keratoderma, oral leukokeratosis, and a variety of epidermal cysts.</description>
        <dbReference type="MIM" id="615726"/>
    </disease>
    <text>The disease is caused by variants affecting the gene represented in this entry.</text>
</comment>
<comment type="allergen">
    <text>Causes an allergic reaction in human. Binds to IgE from atopic dermatitis (AD) patients. Identified as an IgE autoantigen in atopic dermatitis (AD) patients with severe skin manifestations.</text>
</comment>
<comment type="miscellaneous">
    <text>There are at least six isoforms of human type II keratin-6 (K6), K6A being the most abundant representing about 77% of all forms found in epithelia.</text>
</comment>
<comment type="miscellaneous">
    <text>There are two types of cytoskeletal and microfibrillar keratin, I (acidic) and II (neutral to basic) (40-55 and 56-70 kDa, respectively).</text>
</comment>
<comment type="similarity">
    <text evidence="2">Belongs to the intermediate filament family.</text>
</comment>
<gene>
    <name type="primary">KRT6A</name>
    <name type="synonym">K6A</name>
    <name type="synonym">KRT6D</name>
</gene>
<proteinExistence type="evidence at protein level"/>
<keyword id="KW-0002">3D-structure</keyword>
<keyword id="KW-0007">Acetylation</keyword>
<keyword id="KW-0020">Allergen</keyword>
<keyword id="KW-0175">Coiled coil</keyword>
<keyword id="KW-0903">Direct protein sequencing</keyword>
<keyword id="KW-0225">Disease variant</keyword>
<keyword id="KW-0038">Ectodermal dysplasia</keyword>
<keyword id="KW-0403">Intermediate filament</keyword>
<keyword id="KW-0416">Keratin</keyword>
<keyword id="KW-1007">Palmoplantar keratoderma</keyword>
<keyword id="KW-1267">Proteomics identification</keyword>
<keyword id="KW-1185">Reference proteome</keyword>